<name>ATPF_NICTO</name>
<evidence type="ECO:0000255" key="1">
    <source>
        <dbReference type="HAMAP-Rule" id="MF_01398"/>
    </source>
</evidence>
<reference key="1">
    <citation type="journal article" date="2006" name="Mol. Genet. Genomics">
        <title>The chloroplast genome of Nicotiana sylvestris and Nicotiana tomentosiformis: complete sequencing confirms that the Nicotiana sylvestris progenitor is the maternal genome donor of Nicotiana tabacum.</title>
        <authorList>
            <person name="Yukawa M."/>
            <person name="Tsudzuki T."/>
            <person name="Sugiura M."/>
        </authorList>
    </citation>
    <scope>NUCLEOTIDE SEQUENCE [LARGE SCALE GENOMIC DNA]</scope>
</reference>
<geneLocation type="chloroplast"/>
<organism>
    <name type="scientific">Nicotiana tomentosiformis</name>
    <name type="common">Tobacco</name>
    <dbReference type="NCBI Taxonomy" id="4098"/>
    <lineage>
        <taxon>Eukaryota</taxon>
        <taxon>Viridiplantae</taxon>
        <taxon>Streptophyta</taxon>
        <taxon>Embryophyta</taxon>
        <taxon>Tracheophyta</taxon>
        <taxon>Spermatophyta</taxon>
        <taxon>Magnoliopsida</taxon>
        <taxon>eudicotyledons</taxon>
        <taxon>Gunneridae</taxon>
        <taxon>Pentapetalae</taxon>
        <taxon>asterids</taxon>
        <taxon>lamiids</taxon>
        <taxon>Solanales</taxon>
        <taxon>Solanaceae</taxon>
        <taxon>Nicotianoideae</taxon>
        <taxon>Nicotianeae</taxon>
        <taxon>Nicotiana</taxon>
    </lineage>
</organism>
<proteinExistence type="inferred from homology"/>
<dbReference type="EMBL" id="AB240139">
    <property type="protein sequence ID" value="BAE47983.1"/>
    <property type="molecule type" value="Genomic_DNA"/>
</dbReference>
<dbReference type="RefSeq" id="YP_398845.1">
    <property type="nucleotide sequence ID" value="NC_007602.1"/>
</dbReference>
<dbReference type="SMR" id="Q33C52"/>
<dbReference type="GeneID" id="3776340"/>
<dbReference type="KEGG" id="nto:3776340"/>
<dbReference type="OrthoDB" id="1900203at2759"/>
<dbReference type="GO" id="GO:0009535">
    <property type="term" value="C:chloroplast thylakoid membrane"/>
    <property type="evidence" value="ECO:0007669"/>
    <property type="project" value="UniProtKB-SubCell"/>
</dbReference>
<dbReference type="GO" id="GO:0045259">
    <property type="term" value="C:proton-transporting ATP synthase complex"/>
    <property type="evidence" value="ECO:0007669"/>
    <property type="project" value="UniProtKB-KW"/>
</dbReference>
<dbReference type="GO" id="GO:0046933">
    <property type="term" value="F:proton-transporting ATP synthase activity, rotational mechanism"/>
    <property type="evidence" value="ECO:0007669"/>
    <property type="project" value="UniProtKB-UniRule"/>
</dbReference>
<dbReference type="CDD" id="cd06503">
    <property type="entry name" value="ATP-synt_Fo_b"/>
    <property type="match status" value="1"/>
</dbReference>
<dbReference type="HAMAP" id="MF_01398">
    <property type="entry name" value="ATP_synth_b_bprime"/>
    <property type="match status" value="1"/>
</dbReference>
<dbReference type="InterPro" id="IPR002146">
    <property type="entry name" value="ATP_synth_b/b'su_bac/chlpt"/>
</dbReference>
<dbReference type="PANTHER" id="PTHR34264">
    <property type="entry name" value="ATP SYNTHASE SUBUNIT B, CHLOROPLASTIC"/>
    <property type="match status" value="1"/>
</dbReference>
<dbReference type="PANTHER" id="PTHR34264:SF3">
    <property type="entry name" value="ATP SYNTHASE SUBUNIT B, CHLOROPLASTIC"/>
    <property type="match status" value="1"/>
</dbReference>
<dbReference type="Pfam" id="PF00430">
    <property type="entry name" value="ATP-synt_B"/>
    <property type="match status" value="1"/>
</dbReference>
<accession>Q33C52</accession>
<protein>
    <recommendedName>
        <fullName evidence="1">ATP synthase subunit b, chloroplastic</fullName>
    </recommendedName>
    <alternativeName>
        <fullName evidence="1">ATP synthase F(0) sector subunit b</fullName>
    </alternativeName>
    <alternativeName>
        <fullName evidence="1">ATPase subunit I</fullName>
    </alternativeName>
</protein>
<gene>
    <name evidence="1" type="primary">atpF</name>
</gene>
<comment type="function">
    <text evidence="1">F(1)F(0) ATP synthase produces ATP from ADP in the presence of a proton or sodium gradient. F-type ATPases consist of two structural domains, F(1) containing the extramembraneous catalytic core and F(0) containing the membrane proton channel, linked together by a central stalk and a peripheral stalk. During catalysis, ATP synthesis in the catalytic domain of F(1) is coupled via a rotary mechanism of the central stalk subunits to proton translocation.</text>
</comment>
<comment type="function">
    <text evidence="1">Component of the F(0) channel, it forms part of the peripheral stalk, linking F(1) to F(0).</text>
</comment>
<comment type="subunit">
    <text evidence="1">F-type ATPases have 2 components, F(1) - the catalytic core - and F(0) - the membrane proton channel. F(1) has five subunits: alpha(3), beta(3), gamma(1), delta(1), epsilon(1). F(0) has four main subunits: a(1), b(1), b'(1) and c(10-14). The alpha and beta chains form an alternating ring which encloses part of the gamma chain. F(1) is attached to F(0) by a central stalk formed by the gamma and epsilon chains, while a peripheral stalk is formed by the delta, b and b' chains.</text>
</comment>
<comment type="subcellular location">
    <subcellularLocation>
        <location evidence="1">Plastid</location>
        <location evidence="1">Chloroplast thylakoid membrane</location>
        <topology evidence="1">Single-pass membrane protein</topology>
    </subcellularLocation>
</comment>
<comment type="miscellaneous">
    <text>In plastids the F-type ATPase is also known as CF(1)CF(0).</text>
</comment>
<comment type="similarity">
    <text evidence="1">Belongs to the ATPase B chain family.</text>
</comment>
<feature type="chain" id="PRO_0000368956" description="ATP synthase subunit b, chloroplastic">
    <location>
        <begin position="1"/>
        <end position="184"/>
    </location>
</feature>
<feature type="transmembrane region" description="Helical" evidence="1">
    <location>
        <begin position="27"/>
        <end position="49"/>
    </location>
</feature>
<keyword id="KW-0066">ATP synthesis</keyword>
<keyword id="KW-0138">CF(0)</keyword>
<keyword id="KW-0150">Chloroplast</keyword>
<keyword id="KW-0375">Hydrogen ion transport</keyword>
<keyword id="KW-0406">Ion transport</keyword>
<keyword id="KW-0472">Membrane</keyword>
<keyword id="KW-0934">Plastid</keyword>
<keyword id="KW-0793">Thylakoid</keyword>
<keyword id="KW-0812">Transmembrane</keyword>
<keyword id="KW-1133">Transmembrane helix</keyword>
<keyword id="KW-0813">Transport</keyword>
<sequence>MKNVTDSFVSLGHWPSAGSFGFNTDILATNPINLSVVLGVLIFFGKGVLSDLLDNRKQRILNTIQNSEELRGGAIEQLEKARSRLRKVETEAEQFRVNGYSEIEREKLNLINSTYKTLEQLENYKNETIQFEQQRAINQVRQRVFQQVLRGALGTLNSCLNNELHLRTISANIGMLGTMKEITD</sequence>